<gene>
    <name type="primary">UGT2B33</name>
</gene>
<feature type="signal peptide" evidence="1">
    <location>
        <begin position="1"/>
        <end position="24"/>
    </location>
</feature>
<feature type="chain" id="PRO_0000036049" description="UDP-glucuronosyltransferase 2B33">
    <location>
        <begin position="25"/>
        <end position="529"/>
    </location>
</feature>
<feature type="transmembrane region" description="Helical" evidence="1">
    <location>
        <begin position="494"/>
        <end position="514"/>
    </location>
</feature>
<feature type="glycosylation site" description="N-linked (GlcNAc...) asparagine" evidence="1">
    <location>
        <position position="67"/>
    </location>
</feature>
<feature type="glycosylation site" description="N-linked (GlcNAc...) asparagine" evidence="1">
    <location>
        <position position="68"/>
    </location>
</feature>
<organism>
    <name type="scientific">Macaca mulatta</name>
    <name type="common">Rhesus macaque</name>
    <dbReference type="NCBI Taxonomy" id="9544"/>
    <lineage>
        <taxon>Eukaryota</taxon>
        <taxon>Metazoa</taxon>
        <taxon>Chordata</taxon>
        <taxon>Craniata</taxon>
        <taxon>Vertebrata</taxon>
        <taxon>Euteleostomi</taxon>
        <taxon>Mammalia</taxon>
        <taxon>Eutheria</taxon>
        <taxon>Euarchontoglires</taxon>
        <taxon>Primates</taxon>
        <taxon>Haplorrhini</taxon>
        <taxon>Catarrhini</taxon>
        <taxon>Cercopithecidae</taxon>
        <taxon>Cercopithecinae</taxon>
        <taxon>Macaca</taxon>
    </lineage>
</organism>
<name>UDB33_MACMU</name>
<keyword id="KW-0256">Endoplasmic reticulum</keyword>
<keyword id="KW-0325">Glycoprotein</keyword>
<keyword id="KW-0328">Glycosyltransferase</keyword>
<keyword id="KW-0472">Membrane</keyword>
<keyword id="KW-0492">Microsome</keyword>
<keyword id="KW-1185">Reference proteome</keyword>
<keyword id="KW-0732">Signal</keyword>
<keyword id="KW-0808">Transferase</keyword>
<keyword id="KW-0812">Transmembrane</keyword>
<keyword id="KW-1133">Transmembrane helix</keyword>
<dbReference type="EC" id="2.4.1.17"/>
<dbReference type="EMBL" id="AF294902">
    <property type="protein sequence ID" value="AAG21378.1"/>
    <property type="molecule type" value="mRNA"/>
</dbReference>
<dbReference type="RefSeq" id="NP_001028002.1">
    <property type="nucleotide sequence ID" value="NM_001032830.1"/>
</dbReference>
<dbReference type="SMR" id="Q9GLD9"/>
<dbReference type="FunCoup" id="Q9GLD9">
    <property type="interactions" value="380"/>
</dbReference>
<dbReference type="STRING" id="9544.ENSMMUP00000060516"/>
<dbReference type="CAZy" id="GT1">
    <property type="family name" value="Glycosyltransferase Family 1"/>
</dbReference>
<dbReference type="GlyCosmos" id="Q9GLD9">
    <property type="glycosylation" value="2 sites, No reported glycans"/>
</dbReference>
<dbReference type="PaxDb" id="9544-ENSMMUP00000035077"/>
<dbReference type="GeneID" id="574147"/>
<dbReference type="KEGG" id="mcc:574147"/>
<dbReference type="CTD" id="574147"/>
<dbReference type="eggNOG" id="KOG1192">
    <property type="taxonomic scope" value="Eukaryota"/>
</dbReference>
<dbReference type="InParanoid" id="Q9GLD9"/>
<dbReference type="OrthoDB" id="5835829at2759"/>
<dbReference type="Proteomes" id="UP000006718">
    <property type="component" value="Unassembled WGS sequence"/>
</dbReference>
<dbReference type="GO" id="GO:0005789">
    <property type="term" value="C:endoplasmic reticulum membrane"/>
    <property type="evidence" value="ECO:0007669"/>
    <property type="project" value="UniProtKB-SubCell"/>
</dbReference>
<dbReference type="GO" id="GO:0015020">
    <property type="term" value="F:glucuronosyltransferase activity"/>
    <property type="evidence" value="ECO:0000318"/>
    <property type="project" value="GO_Central"/>
</dbReference>
<dbReference type="CDD" id="cd03784">
    <property type="entry name" value="GT1_Gtf-like"/>
    <property type="match status" value="1"/>
</dbReference>
<dbReference type="FunFam" id="3.40.50.2000:FF:000001">
    <property type="entry name" value="UDP-glucuronosyltransferase"/>
    <property type="match status" value="1"/>
</dbReference>
<dbReference type="FunFam" id="3.40.50.2000:FF:000081">
    <property type="entry name" value="UDP-glucuronosyltransferase 2A2"/>
    <property type="match status" value="1"/>
</dbReference>
<dbReference type="Gene3D" id="3.40.50.2000">
    <property type="entry name" value="Glycogen Phosphorylase B"/>
    <property type="match status" value="2"/>
</dbReference>
<dbReference type="InterPro" id="IPR050271">
    <property type="entry name" value="UDP-glycosyltransferase"/>
</dbReference>
<dbReference type="InterPro" id="IPR002213">
    <property type="entry name" value="UDP_glucos_trans"/>
</dbReference>
<dbReference type="InterPro" id="IPR035595">
    <property type="entry name" value="UDP_glycos_trans_CS"/>
</dbReference>
<dbReference type="PANTHER" id="PTHR48043">
    <property type="entry name" value="EG:EG0003.4 PROTEIN-RELATED"/>
    <property type="match status" value="1"/>
</dbReference>
<dbReference type="PANTHER" id="PTHR48043:SF160">
    <property type="entry name" value="UDP-GLUCURONOSYLTRANSFERASE 2B33"/>
    <property type="match status" value="1"/>
</dbReference>
<dbReference type="Pfam" id="PF00201">
    <property type="entry name" value="UDPGT"/>
    <property type="match status" value="1"/>
</dbReference>
<dbReference type="SUPFAM" id="SSF53756">
    <property type="entry name" value="UDP-Glycosyltransferase/glycogen phosphorylase"/>
    <property type="match status" value="1"/>
</dbReference>
<dbReference type="PROSITE" id="PS00375">
    <property type="entry name" value="UDPGT"/>
    <property type="match status" value="1"/>
</dbReference>
<protein>
    <recommendedName>
        <fullName>UDP-glucuronosyltransferase 2B33</fullName>
        <shortName>UDPGT 2B33</shortName>
        <ecNumber>2.4.1.17</ecNumber>
    </recommendedName>
</protein>
<proteinExistence type="evidence at protein level"/>
<reference key="1">
    <citation type="journal article" date="2004" name="Arch. Biochem. Biophys.">
        <title>Identification of UGT2B9*2 and UGT2B33 isolated from female rhesus monkey liver.</title>
        <authorList>
            <person name="Dean B."/>
            <person name="Arison B."/>
            <person name="Chang S."/>
            <person name="Thomas P.E."/>
            <person name="King C."/>
        </authorList>
    </citation>
    <scope>NUCLEOTIDE SEQUENCE [MRNA]</scope>
    <scope>CHARACTERIZATION</scope>
    <source>
        <tissue>Liver</tissue>
    </source>
</reference>
<comment type="function">
    <text>UDPGTs are of major importance in the conjugation and subsequent elimination of potentially toxic xenobiotics and endogenous compounds. This isozyme has glucuronidating capacity on estriol and does not catalyze the glucuronidation of beta-estradiol. Capable of conjugating 4-hydroxyestrone, androsterone, diclofenac, and hyodeoxycholic acid.</text>
</comment>
<comment type="catalytic activity">
    <reaction>
        <text>glucuronate acceptor + UDP-alpha-D-glucuronate = acceptor beta-D-glucuronoside + UDP + H(+)</text>
        <dbReference type="Rhea" id="RHEA:21032"/>
        <dbReference type="ChEBI" id="CHEBI:15378"/>
        <dbReference type="ChEBI" id="CHEBI:58052"/>
        <dbReference type="ChEBI" id="CHEBI:58223"/>
        <dbReference type="ChEBI" id="CHEBI:132367"/>
        <dbReference type="ChEBI" id="CHEBI:132368"/>
        <dbReference type="EC" id="2.4.1.17"/>
    </reaction>
</comment>
<comment type="subcellular location">
    <subcellularLocation>
        <location evidence="2">Microsome membrane</location>
        <topology evidence="2">Single-pass membrane protein</topology>
    </subcellularLocation>
    <subcellularLocation>
        <location evidence="2">Endoplasmic reticulum membrane</location>
        <topology evidence="2">Single-pass membrane protein</topology>
    </subcellularLocation>
</comment>
<comment type="similarity">
    <text evidence="2">Belongs to the UDP-glycosyltransferase family.</text>
</comment>
<accession>Q9GLD9</accession>
<evidence type="ECO:0000255" key="1"/>
<evidence type="ECO:0000305" key="2"/>
<sequence length="529" mass="60858">MSVKWTSIILLIQLSFYFSSGSCGKVLVWAAEYSHWMNMKTILEELVQRGHEVTVLASSASILFDPNNSSALKIEVFPTSLTKTEFENIIRQQIKRWSELPKDTFWLYFSQIQEIMWRFGDISIKFCKDVVSNKKLMKKLQESRFDVVLADPIFPCSELLAELFNIPLVYSLRFTPGYVFEKHCGGFLFPPSYVPVVMSELSDQMTFMERVKNMIYVLYFDFCFQLYDMKKWDQFYSEVLGRHTTLSEIMGKADIWLIRNSWNFQFPHPLLPNVDFIGGLLCKPAKPLPKEMEEFVQSSGENGVVVFTLGSMITNMKEERANVIASALAQIPQKVLWRFDGNKPDTLGVNTRLYKWIPQNDLLGHPKTKAFITHGGANGIYEAIYHGVPMVGIPLFADQPDNIAHMKTRGAAVQLDFDTMSSTDLANALKTVINDPLYKENVMKLSRIQRDQPVKPLDRAVFWIEFVMRHKGAKHLRPAAHDLTWFQYHSLDVIGFLLACVATVIFIIMKCCLFCFWKFTRKGKKGKSD</sequence>